<comment type="subcellular location">
    <subcellularLocation>
        <location evidence="3">Membrane</location>
        <topology evidence="3">Multi-pass membrane protein</topology>
    </subcellularLocation>
</comment>
<comment type="similarity">
    <text evidence="3">Belongs to the cation transport ATPase (P-type) (TC 3.A.3) family. Type IB subfamily.</text>
</comment>
<comment type="caution">
    <text evidence="3">Could be the product of a pseudogene. In strain cv. Columbia, a naturally frameshift at position 543 results in a truncated HMA3 protein. Lacks the magnesium binding sites, suggesting that it has no cadmium/zinc-transporting ATPase activity. A complete sequence for HMA3 can be found in strain cv. Wassilewskija (AC P0CW78).</text>
</comment>
<comment type="sequence caution" evidence="3">
    <conflict type="erroneous gene model prediction">
        <sequence resource="EMBL-CDS" id="CAB43847"/>
    </conflict>
</comment>
<comment type="sequence caution" evidence="3">
    <conflict type="erroneous gene model prediction">
        <sequence resource="EMBL-CDS" id="CAB81005"/>
    </conflict>
</comment>
<sequence length="542" mass="58642">MAEGEESKKMNLQTSYFDVVGICCSSEVSIVGNVLRQVDGVKEFSVIVPSRTVIVVHDTFLISPLQIVKALNQARLEASVRPYGETSLKSQWPSPFAIVSGVLLVLSFFKYFYSPLEWLAIVAVVAGVFPILAKAVASVTRFRLDINALTLIAVIATLCMQDFTEAATIVFLFSVADWLESSAAHKASIVMSSLMSLAPRKAVIADTGLEVDVDEVGINTVVSVKAGESIPIDGVVVDGSCDVDEKTLTGESFPVSKQRESTVMAATINLNGYIKVKTTALARDCVVAKMTKLVEEAQKSQTKTQRFIDKCSRYYTPAVVVSAACFAVIPVLLKVQDLSHWFHLALVVLVSGCPCGLILSTPVATFCALTKAATSGFLIKTGDCLETLAKIKIVAFDKTGTITKAEFMVSDFRSLSPSINLHKLLYWVSSIECKSSHPMAAALIDYARSVSVEPKPDIVENFQNFPGEGVYGRIDGQDIYIGNKRIAQRAGCLTDNVPDIEATMKRGKTIGYIYMGAKLTGSFNLLDGCRYGVAQALKELKS</sequence>
<reference key="1">
    <citation type="journal article" date="2004" name="Plant Cell">
        <title>P-type ATPase heavy metal transporters with roles in essential zinc homeostasis in Arabidopsis.</title>
        <authorList>
            <person name="Hussain D."/>
            <person name="Haydon M.J."/>
            <person name="Wang Y."/>
            <person name="Wong E."/>
            <person name="Sherson S.M."/>
            <person name="Young J."/>
            <person name="Camakaris J."/>
            <person name="Harper J.F."/>
            <person name="Cobbett C.S."/>
        </authorList>
    </citation>
    <scope>NUCLEOTIDE SEQUENCE [MRNA]</scope>
    <scope>IDENTIFICATION OF FRAMESHIFT</scope>
    <source>
        <strain>cv. Columbia</strain>
    </source>
</reference>
<reference key="2">
    <citation type="journal article" date="1999" name="Nature">
        <title>Sequence and analysis of chromosome 4 of the plant Arabidopsis thaliana.</title>
        <authorList>
            <person name="Mayer K.F.X."/>
            <person name="Schueller C."/>
            <person name="Wambutt R."/>
            <person name="Murphy G."/>
            <person name="Volckaert G."/>
            <person name="Pohl T."/>
            <person name="Duesterhoeft A."/>
            <person name="Stiekema W."/>
            <person name="Entian K.-D."/>
            <person name="Terryn N."/>
            <person name="Harris B."/>
            <person name="Ansorge W."/>
            <person name="Brandt P."/>
            <person name="Grivell L.A."/>
            <person name="Rieger M."/>
            <person name="Weichselgartner M."/>
            <person name="de Simone V."/>
            <person name="Obermaier B."/>
            <person name="Mache R."/>
            <person name="Mueller M."/>
            <person name="Kreis M."/>
            <person name="Delseny M."/>
            <person name="Puigdomenech P."/>
            <person name="Watson M."/>
            <person name="Schmidtheini T."/>
            <person name="Reichert B."/>
            <person name="Portetelle D."/>
            <person name="Perez-Alonso M."/>
            <person name="Boutry M."/>
            <person name="Bancroft I."/>
            <person name="Vos P."/>
            <person name="Hoheisel J."/>
            <person name="Zimmermann W."/>
            <person name="Wedler H."/>
            <person name="Ridley P."/>
            <person name="Langham S.-A."/>
            <person name="McCullagh B."/>
            <person name="Bilham L."/>
            <person name="Robben J."/>
            <person name="van der Schueren J."/>
            <person name="Grymonprez B."/>
            <person name="Chuang Y.-J."/>
            <person name="Vandenbussche F."/>
            <person name="Braeken M."/>
            <person name="Weltjens I."/>
            <person name="Voet M."/>
            <person name="Bastiaens I."/>
            <person name="Aert R."/>
            <person name="Defoor E."/>
            <person name="Weitzenegger T."/>
            <person name="Bothe G."/>
            <person name="Ramsperger U."/>
            <person name="Hilbert H."/>
            <person name="Braun M."/>
            <person name="Holzer E."/>
            <person name="Brandt A."/>
            <person name="Peters S."/>
            <person name="van Staveren M."/>
            <person name="Dirkse W."/>
            <person name="Mooijman P."/>
            <person name="Klein Lankhorst R."/>
            <person name="Rose M."/>
            <person name="Hauf J."/>
            <person name="Koetter P."/>
            <person name="Berneiser S."/>
            <person name="Hempel S."/>
            <person name="Feldpausch M."/>
            <person name="Lamberth S."/>
            <person name="Van den Daele H."/>
            <person name="De Keyser A."/>
            <person name="Buysshaert C."/>
            <person name="Gielen J."/>
            <person name="Villarroel R."/>
            <person name="De Clercq R."/>
            <person name="van Montagu M."/>
            <person name="Rogers J."/>
            <person name="Cronin A."/>
            <person name="Quail M.A."/>
            <person name="Bray-Allen S."/>
            <person name="Clark L."/>
            <person name="Doggett J."/>
            <person name="Hall S."/>
            <person name="Kay M."/>
            <person name="Lennard N."/>
            <person name="McLay K."/>
            <person name="Mayes R."/>
            <person name="Pettett A."/>
            <person name="Rajandream M.A."/>
            <person name="Lyne M."/>
            <person name="Benes V."/>
            <person name="Rechmann S."/>
            <person name="Borkova D."/>
            <person name="Bloecker H."/>
            <person name="Scharfe M."/>
            <person name="Grimm M."/>
            <person name="Loehnert T.-H."/>
            <person name="Dose S."/>
            <person name="de Haan M."/>
            <person name="Maarse A.C."/>
            <person name="Schaefer M."/>
            <person name="Mueller-Auer S."/>
            <person name="Gabel C."/>
            <person name="Fuchs M."/>
            <person name="Fartmann B."/>
            <person name="Granderath K."/>
            <person name="Dauner D."/>
            <person name="Herzl A."/>
            <person name="Neumann S."/>
            <person name="Argiriou A."/>
            <person name="Vitale D."/>
            <person name="Liguori R."/>
            <person name="Piravandi E."/>
            <person name="Massenet O."/>
            <person name="Quigley F."/>
            <person name="Clabauld G."/>
            <person name="Muendlein A."/>
            <person name="Felber R."/>
            <person name="Schnabl S."/>
            <person name="Hiller R."/>
            <person name="Schmidt W."/>
            <person name="Lecharny A."/>
            <person name="Aubourg S."/>
            <person name="Chefdor F."/>
            <person name="Cooke R."/>
            <person name="Berger C."/>
            <person name="Monfort A."/>
            <person name="Casacuberta E."/>
            <person name="Gibbons T."/>
            <person name="Weber N."/>
            <person name="Vandenbol M."/>
            <person name="Bargues M."/>
            <person name="Terol J."/>
            <person name="Torres A."/>
            <person name="Perez-Perez A."/>
            <person name="Purnelle B."/>
            <person name="Bent E."/>
            <person name="Johnson S."/>
            <person name="Tacon D."/>
            <person name="Jesse T."/>
            <person name="Heijnen L."/>
            <person name="Schwarz S."/>
            <person name="Scholler P."/>
            <person name="Heber S."/>
            <person name="Francs P."/>
            <person name="Bielke C."/>
            <person name="Frishman D."/>
            <person name="Haase D."/>
            <person name="Lemcke K."/>
            <person name="Mewes H.-W."/>
            <person name="Stocker S."/>
            <person name="Zaccaria P."/>
            <person name="Bevan M."/>
            <person name="Wilson R.K."/>
            <person name="de la Bastide M."/>
            <person name="Habermann K."/>
            <person name="Parnell L."/>
            <person name="Dedhia N."/>
            <person name="Gnoj L."/>
            <person name="Schutz K."/>
            <person name="Huang E."/>
            <person name="Spiegel L."/>
            <person name="Sekhon M."/>
            <person name="Murray J."/>
            <person name="Sheet P."/>
            <person name="Cordes M."/>
            <person name="Abu-Threideh J."/>
            <person name="Stoneking T."/>
            <person name="Kalicki J."/>
            <person name="Graves T."/>
            <person name="Harmon G."/>
            <person name="Edwards J."/>
            <person name="Latreille P."/>
            <person name="Courtney L."/>
            <person name="Cloud J."/>
            <person name="Abbott A."/>
            <person name="Scott K."/>
            <person name="Johnson D."/>
            <person name="Minx P."/>
            <person name="Bentley D."/>
            <person name="Fulton B."/>
            <person name="Miller N."/>
            <person name="Greco T."/>
            <person name="Kemp K."/>
            <person name="Kramer J."/>
            <person name="Fulton L."/>
            <person name="Mardis E."/>
            <person name="Dante M."/>
            <person name="Pepin K."/>
            <person name="Hillier L.W."/>
            <person name="Nelson J."/>
            <person name="Spieth J."/>
            <person name="Ryan E."/>
            <person name="Andrews S."/>
            <person name="Geisel C."/>
            <person name="Layman D."/>
            <person name="Du H."/>
            <person name="Ali J."/>
            <person name="Berghoff A."/>
            <person name="Jones K."/>
            <person name="Drone K."/>
            <person name="Cotton M."/>
            <person name="Joshu C."/>
            <person name="Antonoiu B."/>
            <person name="Zidanic M."/>
            <person name="Strong C."/>
            <person name="Sun H."/>
            <person name="Lamar B."/>
            <person name="Yordan C."/>
            <person name="Ma P."/>
            <person name="Zhong J."/>
            <person name="Preston R."/>
            <person name="Vil D."/>
            <person name="Shekher M."/>
            <person name="Matero A."/>
            <person name="Shah R."/>
            <person name="Swaby I.K."/>
            <person name="O'Shaughnessy A."/>
            <person name="Rodriguez M."/>
            <person name="Hoffman J."/>
            <person name="Till S."/>
            <person name="Granat S."/>
            <person name="Shohdy N."/>
            <person name="Hasegawa A."/>
            <person name="Hameed A."/>
            <person name="Lodhi M."/>
            <person name="Johnson A."/>
            <person name="Chen E."/>
            <person name="Marra M.A."/>
            <person name="Martienssen R."/>
            <person name="McCombie W.R."/>
        </authorList>
    </citation>
    <scope>NUCLEOTIDE SEQUENCE [LARGE SCALE GENOMIC DNA]</scope>
    <source>
        <strain>cv. Columbia</strain>
    </source>
</reference>
<reference key="3">
    <citation type="journal article" date="2017" name="Plant J.">
        <title>Araport11: a complete reannotation of the Arabidopsis thaliana reference genome.</title>
        <authorList>
            <person name="Cheng C.Y."/>
            <person name="Krishnakumar V."/>
            <person name="Chan A.P."/>
            <person name="Thibaud-Nissen F."/>
            <person name="Schobel S."/>
            <person name="Town C.D."/>
        </authorList>
    </citation>
    <scope>GENOME REANNOTATION</scope>
    <source>
        <strain>cv. Columbia</strain>
    </source>
</reference>
<reference key="4">
    <citation type="journal article" date="2006" name="Plant Biotechnol. J.">
        <title>Simultaneous high-throughput recombinational cloning of open reading frames in closed and open configurations.</title>
        <authorList>
            <person name="Underwood B.A."/>
            <person name="Vanderhaeghen R."/>
            <person name="Whitford R."/>
            <person name="Town C.D."/>
            <person name="Hilson P."/>
        </authorList>
    </citation>
    <scope>NUCLEOTIDE SEQUENCE [LARGE SCALE MRNA]</scope>
    <source>
        <strain>cv. Columbia</strain>
    </source>
</reference>
<protein>
    <recommendedName>
        <fullName>Putative inactive cadmium/zinc-transporting ATPase HMA3</fullName>
    </recommendedName>
    <alternativeName>
        <fullName>Putative inactive cadmium/zinc-transporting ATPase 4</fullName>
    </alternativeName>
    <alternativeName>
        <fullName>Putative inactive protein HEAVY METAL ATPASE 3</fullName>
    </alternativeName>
</protein>
<name>HMA3A_ARATH</name>
<gene>
    <name type="primary">HMA3</name>
    <name type="ordered locus">At4g30120</name>
    <name type="ORF">F6G3.150</name>
</gene>
<feature type="chain" id="PRO_0000046401" description="Putative inactive cadmium/zinc-transporting ATPase HMA3">
    <location>
        <begin position="1"/>
        <end position="542"/>
    </location>
</feature>
<feature type="topological domain" description="Cytoplasmic" evidence="1">
    <location>
        <begin position="1"/>
        <end position="89"/>
    </location>
</feature>
<feature type="transmembrane region" description="Helical" evidence="1">
    <location>
        <begin position="90"/>
        <end position="111"/>
    </location>
</feature>
<feature type="topological domain" description="Extracellular" evidence="1">
    <location>
        <begin position="112"/>
        <end position="114"/>
    </location>
</feature>
<feature type="transmembrane region" description="Helical" evidence="1">
    <location>
        <begin position="115"/>
        <end position="134"/>
    </location>
</feature>
<feature type="topological domain" description="Cytoplasmic" evidence="1">
    <location>
        <begin position="135"/>
        <end position="141"/>
    </location>
</feature>
<feature type="transmembrane region" description="Helical" evidence="1">
    <location>
        <begin position="142"/>
        <end position="162"/>
    </location>
</feature>
<feature type="topological domain" description="Extracellular" evidence="1">
    <location>
        <position position="163"/>
    </location>
</feature>
<feature type="transmembrane region" description="Helical" evidence="1">
    <location>
        <begin position="164"/>
        <end position="184"/>
    </location>
</feature>
<feature type="topological domain" description="Cytoplasmic" evidence="1">
    <location>
        <begin position="185"/>
        <end position="310"/>
    </location>
</feature>
<feature type="transmembrane region" description="Helical" evidence="1">
    <location>
        <begin position="311"/>
        <end position="333"/>
    </location>
</feature>
<feature type="topological domain" description="Extracellular" evidence="1">
    <location>
        <begin position="334"/>
        <end position="341"/>
    </location>
</feature>
<feature type="transmembrane region" description="Helical" evidence="1">
    <location>
        <begin position="342"/>
        <end position="359"/>
    </location>
</feature>
<feature type="topological domain" description="Cytoplasmic" evidence="1">
    <location>
        <begin position="360"/>
        <end position="542"/>
    </location>
</feature>
<feature type="domain" description="HMA" evidence="2">
    <location>
        <begin position="13"/>
        <end position="79"/>
    </location>
</feature>
<organism>
    <name type="scientific">Arabidopsis thaliana</name>
    <name type="common">Mouse-ear cress</name>
    <dbReference type="NCBI Taxonomy" id="3702"/>
    <lineage>
        <taxon>Eukaryota</taxon>
        <taxon>Viridiplantae</taxon>
        <taxon>Streptophyta</taxon>
        <taxon>Embryophyta</taxon>
        <taxon>Tracheophyta</taxon>
        <taxon>Spermatophyta</taxon>
        <taxon>Magnoliopsida</taxon>
        <taxon>eudicotyledons</taxon>
        <taxon>Gunneridae</taxon>
        <taxon>Pentapetalae</taxon>
        <taxon>rosids</taxon>
        <taxon>malvids</taxon>
        <taxon>Brassicales</taxon>
        <taxon>Brassicaceae</taxon>
        <taxon>Camelineae</taxon>
        <taxon>Arabidopsis</taxon>
    </lineage>
</organism>
<evidence type="ECO:0000255" key="1"/>
<evidence type="ECO:0000255" key="2">
    <source>
        <dbReference type="PROSITE-ProRule" id="PRU00280"/>
    </source>
</evidence>
<evidence type="ECO:0000305" key="3"/>
<proteinExistence type="uncertain"/>
<keyword id="KW-0472">Membrane</keyword>
<keyword id="KW-1185">Reference proteome</keyword>
<keyword id="KW-0812">Transmembrane</keyword>
<keyword id="KW-1133">Transmembrane helix</keyword>
<dbReference type="EMBL" id="AY434730">
    <property type="status" value="NOT_ANNOTATED_CDS"/>
    <property type="molecule type" value="mRNA"/>
</dbReference>
<dbReference type="EMBL" id="AL078464">
    <property type="protein sequence ID" value="CAB43847.1"/>
    <property type="status" value="ALT_SEQ"/>
    <property type="molecule type" value="Genomic_DNA"/>
</dbReference>
<dbReference type="EMBL" id="AL161576">
    <property type="protein sequence ID" value="CAB81005.1"/>
    <property type="status" value="ALT_SEQ"/>
    <property type="molecule type" value="Genomic_DNA"/>
</dbReference>
<dbReference type="EMBL" id="CP002687">
    <property type="protein sequence ID" value="AEE85723.1"/>
    <property type="molecule type" value="Genomic_DNA"/>
</dbReference>
<dbReference type="EMBL" id="DQ446885">
    <property type="protein sequence ID" value="ABE66104.1"/>
    <property type="molecule type" value="mRNA"/>
</dbReference>
<dbReference type="PIR" id="A85352">
    <property type="entry name" value="A85352"/>
</dbReference>
<dbReference type="PIR" id="T08988">
    <property type="entry name" value="T08988"/>
</dbReference>
<dbReference type="RefSeq" id="NP_194741.2">
    <property type="nucleotide sequence ID" value="NM_119158.4"/>
</dbReference>
<dbReference type="SMR" id="P0CW77"/>
<dbReference type="BioGRID" id="14422">
    <property type="interactions" value="2"/>
</dbReference>
<dbReference type="FunCoup" id="P0CW77">
    <property type="interactions" value="3"/>
</dbReference>
<dbReference type="IntAct" id="P0CW77">
    <property type="interactions" value="1"/>
</dbReference>
<dbReference type="STRING" id="3702.P0CW77"/>
<dbReference type="GlyGen" id="P0CW77">
    <property type="glycosylation" value="1 site"/>
</dbReference>
<dbReference type="iPTMnet" id="P0CW77"/>
<dbReference type="PaxDb" id="3702-AT4G30120.1"/>
<dbReference type="EnsemblPlants" id="AT4G30120.1">
    <property type="protein sequence ID" value="AT4G30120.1"/>
    <property type="gene ID" value="AT4G30120"/>
</dbReference>
<dbReference type="GeneID" id="829135"/>
<dbReference type="Gramene" id="AT4G30120.1">
    <property type="protein sequence ID" value="AT4G30120.1"/>
    <property type="gene ID" value="AT4G30120"/>
</dbReference>
<dbReference type="KEGG" id="ath:AT4G30120"/>
<dbReference type="Araport" id="AT4G30120"/>
<dbReference type="TAIR" id="AT4G30120">
    <property type="gene designation" value="HMA3"/>
</dbReference>
<dbReference type="eggNOG" id="KOG0207">
    <property type="taxonomic scope" value="Eukaryota"/>
</dbReference>
<dbReference type="HOGENOM" id="CLU_001771_6_1_1"/>
<dbReference type="InParanoid" id="P0CW77"/>
<dbReference type="OMA" id="SAVDICN"/>
<dbReference type="BioCyc" id="MetaCyc:MONOMER-14750"/>
<dbReference type="Proteomes" id="UP000006548">
    <property type="component" value="Chromosome 4"/>
</dbReference>
<dbReference type="ExpressionAtlas" id="P0CW77">
    <property type="expression patterns" value="baseline and differential"/>
</dbReference>
<dbReference type="GO" id="GO:0005774">
    <property type="term" value="C:vacuolar membrane"/>
    <property type="evidence" value="ECO:0000314"/>
    <property type="project" value="TAIR"/>
</dbReference>
<dbReference type="GO" id="GO:0005524">
    <property type="term" value="F:ATP binding"/>
    <property type="evidence" value="ECO:0007669"/>
    <property type="project" value="InterPro"/>
</dbReference>
<dbReference type="GO" id="GO:0016887">
    <property type="term" value="F:ATP hydrolysis activity"/>
    <property type="evidence" value="ECO:0007669"/>
    <property type="project" value="InterPro"/>
</dbReference>
<dbReference type="GO" id="GO:0019829">
    <property type="term" value="F:ATPase-coupled monoatomic cation transmembrane transporter activity"/>
    <property type="evidence" value="ECO:0007669"/>
    <property type="project" value="InterPro"/>
</dbReference>
<dbReference type="GO" id="GO:0046872">
    <property type="term" value="F:metal ion binding"/>
    <property type="evidence" value="ECO:0007669"/>
    <property type="project" value="InterPro"/>
</dbReference>
<dbReference type="GO" id="GO:0071585">
    <property type="term" value="P:detoxification of cadmium ion"/>
    <property type="evidence" value="ECO:0000315"/>
    <property type="project" value="TAIR"/>
</dbReference>
<dbReference type="CDD" id="cd00371">
    <property type="entry name" value="HMA"/>
    <property type="match status" value="1"/>
</dbReference>
<dbReference type="FunFam" id="2.70.150.10:FF:000002">
    <property type="entry name" value="Copper-transporting ATPase 1, putative"/>
    <property type="match status" value="1"/>
</dbReference>
<dbReference type="FunFam" id="3.30.70.100:FF:000022">
    <property type="entry name" value="Putative cadmium/zinc-transporting ATPase 3"/>
    <property type="match status" value="1"/>
</dbReference>
<dbReference type="FunFam" id="3.40.1110.10:FF:000043">
    <property type="entry name" value="Putative cadmium/zinc-transporting ATPase 3"/>
    <property type="match status" value="1"/>
</dbReference>
<dbReference type="Gene3D" id="3.30.70.100">
    <property type="match status" value="1"/>
</dbReference>
<dbReference type="Gene3D" id="3.40.1110.10">
    <property type="entry name" value="Calcium-transporting ATPase, cytoplasmic domain N"/>
    <property type="match status" value="1"/>
</dbReference>
<dbReference type="Gene3D" id="2.70.150.10">
    <property type="entry name" value="Calcium-transporting ATPase, cytoplasmic transduction domain A"/>
    <property type="match status" value="1"/>
</dbReference>
<dbReference type="Gene3D" id="3.40.50.1000">
    <property type="entry name" value="HAD superfamily/HAD-like"/>
    <property type="match status" value="1"/>
</dbReference>
<dbReference type="InterPro" id="IPR023299">
    <property type="entry name" value="ATPase_P-typ_cyto_dom_N"/>
</dbReference>
<dbReference type="InterPro" id="IPR018303">
    <property type="entry name" value="ATPase_P-typ_P_site"/>
</dbReference>
<dbReference type="InterPro" id="IPR023298">
    <property type="entry name" value="ATPase_P-typ_TM_dom_sf"/>
</dbReference>
<dbReference type="InterPro" id="IPR008250">
    <property type="entry name" value="ATPase_P-typ_transduc_dom_A_sf"/>
</dbReference>
<dbReference type="InterPro" id="IPR051014">
    <property type="entry name" value="Cation_Transport_ATPase_IB"/>
</dbReference>
<dbReference type="InterPro" id="IPR023214">
    <property type="entry name" value="HAD_sf"/>
</dbReference>
<dbReference type="InterPro" id="IPR006121">
    <property type="entry name" value="HMA_dom"/>
</dbReference>
<dbReference type="InterPro" id="IPR036163">
    <property type="entry name" value="HMA_dom_sf"/>
</dbReference>
<dbReference type="InterPro" id="IPR027256">
    <property type="entry name" value="P-typ_ATPase_IB"/>
</dbReference>
<dbReference type="InterPro" id="IPR001757">
    <property type="entry name" value="P_typ_ATPase"/>
</dbReference>
<dbReference type="NCBIfam" id="TIGR01525">
    <property type="entry name" value="ATPase-IB_hvy"/>
    <property type="match status" value="1"/>
</dbReference>
<dbReference type="NCBIfam" id="TIGR01494">
    <property type="entry name" value="ATPase_P-type"/>
    <property type="match status" value="1"/>
</dbReference>
<dbReference type="PANTHER" id="PTHR48085">
    <property type="entry name" value="CADMIUM/ZINC-TRANSPORTING ATPASE HMA2-RELATED"/>
    <property type="match status" value="1"/>
</dbReference>
<dbReference type="PANTHER" id="PTHR48085:SF6">
    <property type="entry name" value="INACTIVE CADMIUM_ZINC-TRANSPORTING ATPASE HMA3-RELATED"/>
    <property type="match status" value="1"/>
</dbReference>
<dbReference type="Pfam" id="PF00122">
    <property type="entry name" value="E1-E2_ATPase"/>
    <property type="match status" value="1"/>
</dbReference>
<dbReference type="Pfam" id="PF00702">
    <property type="entry name" value="Hydrolase"/>
    <property type="match status" value="1"/>
</dbReference>
<dbReference type="PRINTS" id="PR00119">
    <property type="entry name" value="CATATPASE"/>
</dbReference>
<dbReference type="SUPFAM" id="SSF81653">
    <property type="entry name" value="Calcium ATPase, transduction domain A"/>
    <property type="match status" value="1"/>
</dbReference>
<dbReference type="SUPFAM" id="SSF81665">
    <property type="entry name" value="Calcium ATPase, transmembrane domain M"/>
    <property type="match status" value="1"/>
</dbReference>
<dbReference type="SUPFAM" id="SSF55008">
    <property type="entry name" value="HMA, heavy metal-associated domain"/>
    <property type="match status" value="1"/>
</dbReference>
<dbReference type="SUPFAM" id="SSF81660">
    <property type="entry name" value="Metal cation-transporting ATPase, ATP-binding domain N"/>
    <property type="match status" value="1"/>
</dbReference>
<dbReference type="PROSITE" id="PS00154">
    <property type="entry name" value="ATPASE_E1_E2"/>
    <property type="match status" value="1"/>
</dbReference>
<dbReference type="PROSITE" id="PS50846">
    <property type="entry name" value="HMA_2"/>
    <property type="match status" value="1"/>
</dbReference>
<accession>P0CW77</accession>
<accession>Q1PE33</accession>
<accession>Q8LPW0</accession>
<accession>Q9LCZ8</accession>
<accession>Q9SZW5</accession>